<sequence length="363" mass="40983">MPHWITHPSELTDRLQAARPARIGLDTEFIRERTYWPQLALVQMAIGEEILLIDPLIPGMNAALKEWLTATDIVKVMHSASEDLVTFKCACGVLPRPLFDTQIAAALAGVGGGMGYQKLVQEVTGTLLTKGETRSDWMRRPLSPSQLEYAADDVRYLFAIHDELTRRLTEQNRLGWLAEDAERLLATVEHDDGERWPHVSLRTAQFLEPAAQRRLLRLLRWRDLQARQSDRPRSWILDNEVASQLARFPPADLDALLQQFDKFPKAPRKLANAVWDALNTPLPDEEHAPLAQAATDGNKAVLKRLQDTVAQRSHELGLPDGLLASRRHLETLIEQRSWPAALGQWRRAVLEAQVMPLLEASEA</sequence>
<gene>
    <name evidence="1" type="primary">rnd</name>
    <name type="ordered locus">XOO2742</name>
</gene>
<organism>
    <name type="scientific">Xanthomonas oryzae pv. oryzae (strain KACC10331 / KXO85)</name>
    <dbReference type="NCBI Taxonomy" id="291331"/>
    <lineage>
        <taxon>Bacteria</taxon>
        <taxon>Pseudomonadati</taxon>
        <taxon>Pseudomonadota</taxon>
        <taxon>Gammaproteobacteria</taxon>
        <taxon>Lysobacterales</taxon>
        <taxon>Lysobacteraceae</taxon>
        <taxon>Xanthomonas</taxon>
    </lineage>
</organism>
<comment type="function">
    <text evidence="1">Exonuclease involved in the 3' processing of various precursor tRNAs. Initiates hydrolysis at the 3'-terminus of an RNA molecule and releases 5'-mononucleotides.</text>
</comment>
<comment type="catalytic activity">
    <reaction evidence="1">
        <text>Exonucleolytic cleavage that removes extra residues from the 3'-terminus of tRNA to produce 5'-mononucleotides.</text>
        <dbReference type="EC" id="3.1.13.5"/>
    </reaction>
</comment>
<comment type="cofactor">
    <cofactor evidence="1">
        <name>a divalent metal cation</name>
        <dbReference type="ChEBI" id="CHEBI:60240"/>
    </cofactor>
</comment>
<comment type="subcellular location">
    <subcellularLocation>
        <location evidence="1">Cytoplasm</location>
    </subcellularLocation>
</comment>
<comment type="similarity">
    <text evidence="1">Belongs to the RNase D family.</text>
</comment>
<comment type="sequence caution" evidence="2">
    <conflict type="erroneous initiation">
        <sequence resource="EMBL-CDS" id="AAW75996"/>
    </conflict>
    <text>Extended N-terminus.</text>
</comment>
<dbReference type="EC" id="3.1.13.5" evidence="1"/>
<dbReference type="EMBL" id="AE013598">
    <property type="protein sequence ID" value="AAW75996.1"/>
    <property type="status" value="ALT_INIT"/>
    <property type="molecule type" value="Genomic_DNA"/>
</dbReference>
<dbReference type="SMR" id="Q5GZ75"/>
<dbReference type="STRING" id="291331.XOO2742"/>
<dbReference type="KEGG" id="xoo:XOO2742"/>
<dbReference type="PATRIC" id="fig|291331.8.peg.3030"/>
<dbReference type="HOGENOM" id="CLU_042387_0_0_6"/>
<dbReference type="Proteomes" id="UP000006735">
    <property type="component" value="Chromosome"/>
</dbReference>
<dbReference type="GO" id="GO:0005737">
    <property type="term" value="C:cytoplasm"/>
    <property type="evidence" value="ECO:0007669"/>
    <property type="project" value="UniProtKB-SubCell"/>
</dbReference>
<dbReference type="GO" id="GO:0008408">
    <property type="term" value="F:3'-5' exonuclease activity"/>
    <property type="evidence" value="ECO:0007669"/>
    <property type="project" value="InterPro"/>
</dbReference>
<dbReference type="GO" id="GO:0003676">
    <property type="term" value="F:nucleic acid binding"/>
    <property type="evidence" value="ECO:0007669"/>
    <property type="project" value="InterPro"/>
</dbReference>
<dbReference type="GO" id="GO:0000166">
    <property type="term" value="F:nucleotide binding"/>
    <property type="evidence" value="ECO:0007669"/>
    <property type="project" value="InterPro"/>
</dbReference>
<dbReference type="GO" id="GO:0033890">
    <property type="term" value="F:ribonuclease D activity"/>
    <property type="evidence" value="ECO:0007669"/>
    <property type="project" value="UniProtKB-UniRule"/>
</dbReference>
<dbReference type="GO" id="GO:0042780">
    <property type="term" value="P:tRNA 3'-end processing"/>
    <property type="evidence" value="ECO:0007669"/>
    <property type="project" value="UniProtKB-UniRule"/>
</dbReference>
<dbReference type="CDD" id="cd06142">
    <property type="entry name" value="RNaseD_exo"/>
    <property type="match status" value="1"/>
</dbReference>
<dbReference type="Gene3D" id="1.10.150.80">
    <property type="entry name" value="HRDC domain"/>
    <property type="match status" value="2"/>
</dbReference>
<dbReference type="Gene3D" id="3.30.420.10">
    <property type="entry name" value="Ribonuclease H-like superfamily/Ribonuclease H"/>
    <property type="match status" value="1"/>
</dbReference>
<dbReference type="HAMAP" id="MF_01899">
    <property type="entry name" value="RNase_D"/>
    <property type="match status" value="1"/>
</dbReference>
<dbReference type="InterPro" id="IPR002562">
    <property type="entry name" value="3'-5'_exonuclease_dom"/>
</dbReference>
<dbReference type="InterPro" id="IPR010997">
    <property type="entry name" value="HRDC-like_sf"/>
</dbReference>
<dbReference type="InterPro" id="IPR002121">
    <property type="entry name" value="HRDC_dom"/>
</dbReference>
<dbReference type="InterPro" id="IPR044876">
    <property type="entry name" value="HRDC_dom_sf"/>
</dbReference>
<dbReference type="InterPro" id="IPR006292">
    <property type="entry name" value="RNase_D"/>
</dbReference>
<dbReference type="InterPro" id="IPR051086">
    <property type="entry name" value="RNase_D-like"/>
</dbReference>
<dbReference type="InterPro" id="IPR012337">
    <property type="entry name" value="RNaseH-like_sf"/>
</dbReference>
<dbReference type="InterPro" id="IPR036397">
    <property type="entry name" value="RNaseH_sf"/>
</dbReference>
<dbReference type="NCBIfam" id="TIGR01388">
    <property type="entry name" value="rnd"/>
    <property type="match status" value="1"/>
</dbReference>
<dbReference type="PANTHER" id="PTHR47649">
    <property type="entry name" value="RIBONUCLEASE D"/>
    <property type="match status" value="1"/>
</dbReference>
<dbReference type="PANTHER" id="PTHR47649:SF1">
    <property type="entry name" value="RIBONUCLEASE D"/>
    <property type="match status" value="1"/>
</dbReference>
<dbReference type="Pfam" id="PF01612">
    <property type="entry name" value="DNA_pol_A_exo1"/>
    <property type="match status" value="1"/>
</dbReference>
<dbReference type="Pfam" id="PF00570">
    <property type="entry name" value="HRDC"/>
    <property type="match status" value="1"/>
</dbReference>
<dbReference type="SMART" id="SM00474">
    <property type="entry name" value="35EXOc"/>
    <property type="match status" value="1"/>
</dbReference>
<dbReference type="SUPFAM" id="SSF47819">
    <property type="entry name" value="HRDC-like"/>
    <property type="match status" value="2"/>
</dbReference>
<dbReference type="SUPFAM" id="SSF53098">
    <property type="entry name" value="Ribonuclease H-like"/>
    <property type="match status" value="1"/>
</dbReference>
<dbReference type="PROSITE" id="PS50967">
    <property type="entry name" value="HRDC"/>
    <property type="match status" value="1"/>
</dbReference>
<reference key="1">
    <citation type="journal article" date="2005" name="Nucleic Acids Res.">
        <title>The genome sequence of Xanthomonas oryzae pathovar oryzae KACC10331, the bacterial blight pathogen of rice.</title>
        <authorList>
            <person name="Lee B.-M."/>
            <person name="Park Y.-J."/>
            <person name="Park D.-S."/>
            <person name="Kang H.-W."/>
            <person name="Kim J.-G."/>
            <person name="Song E.-S."/>
            <person name="Park I.-C."/>
            <person name="Yoon U.-H."/>
            <person name="Hahn J.-H."/>
            <person name="Koo B.-S."/>
            <person name="Lee G.-B."/>
            <person name="Kim H."/>
            <person name="Park H.-S."/>
            <person name="Yoon K.-O."/>
            <person name="Kim J.-H."/>
            <person name="Jung C.-H."/>
            <person name="Koh N.-H."/>
            <person name="Seo J.-S."/>
            <person name="Go S.-J."/>
        </authorList>
    </citation>
    <scope>NUCLEOTIDE SEQUENCE [LARGE SCALE GENOMIC DNA]</scope>
    <source>
        <strain>KACC10331 / KXO85</strain>
    </source>
</reference>
<evidence type="ECO:0000255" key="1">
    <source>
        <dbReference type="HAMAP-Rule" id="MF_01899"/>
    </source>
</evidence>
<evidence type="ECO:0000305" key="2"/>
<name>RND_XANOR</name>
<accession>Q5GZ75</accession>
<keyword id="KW-0963">Cytoplasm</keyword>
<keyword id="KW-0269">Exonuclease</keyword>
<keyword id="KW-0378">Hydrolase</keyword>
<keyword id="KW-0540">Nuclease</keyword>
<keyword id="KW-1185">Reference proteome</keyword>
<keyword id="KW-0819">tRNA processing</keyword>
<protein>
    <recommendedName>
        <fullName evidence="1">Ribonuclease D</fullName>
        <shortName evidence="1">RNase D</shortName>
        <ecNumber evidence="1">3.1.13.5</ecNumber>
    </recommendedName>
</protein>
<proteinExistence type="inferred from homology"/>
<feature type="chain" id="PRO_0000411074" description="Ribonuclease D">
    <location>
        <begin position="1"/>
        <end position="363"/>
    </location>
</feature>
<feature type="domain" description="3'-5' exonuclease" evidence="1">
    <location>
        <begin position="5"/>
        <end position="168"/>
    </location>
</feature>
<feature type="domain" description="HRDC" evidence="1">
    <location>
        <begin position="208"/>
        <end position="288"/>
    </location>
</feature>